<accession>B7VIS8</accession>
<organism>
    <name type="scientific">Vibrio atlanticus (strain LGP32)</name>
    <name type="common">Vibrio splendidus (strain Mel32)</name>
    <dbReference type="NCBI Taxonomy" id="575788"/>
    <lineage>
        <taxon>Bacteria</taxon>
        <taxon>Pseudomonadati</taxon>
        <taxon>Pseudomonadota</taxon>
        <taxon>Gammaproteobacteria</taxon>
        <taxon>Vibrionales</taxon>
        <taxon>Vibrionaceae</taxon>
        <taxon>Vibrio</taxon>
    </lineage>
</organism>
<feature type="chain" id="PRO_1000197839" description="UPF0178 protein VS_2364">
    <location>
        <begin position="1"/>
        <end position="147"/>
    </location>
</feature>
<protein>
    <recommendedName>
        <fullName evidence="1">UPF0178 protein VS_2364</fullName>
    </recommendedName>
</protein>
<reference key="1">
    <citation type="submission" date="2009-02" db="EMBL/GenBank/DDBJ databases">
        <title>Vibrio splendidus str. LGP32 complete genome.</title>
        <authorList>
            <person name="Mazel D."/>
            <person name="Le Roux F."/>
        </authorList>
    </citation>
    <scope>NUCLEOTIDE SEQUENCE [LARGE SCALE GENOMIC DNA]</scope>
    <source>
        <strain>LGP32</strain>
    </source>
</reference>
<gene>
    <name type="ordered locus">VS_2364</name>
</gene>
<proteinExistence type="inferred from homology"/>
<name>Y2364_VIBA3</name>
<evidence type="ECO:0000255" key="1">
    <source>
        <dbReference type="HAMAP-Rule" id="MF_00489"/>
    </source>
</evidence>
<dbReference type="EMBL" id="FM954972">
    <property type="protein sequence ID" value="CAV19524.1"/>
    <property type="molecule type" value="Genomic_DNA"/>
</dbReference>
<dbReference type="KEGG" id="vsp:VS_2364"/>
<dbReference type="eggNOG" id="COG1671">
    <property type="taxonomic scope" value="Bacteria"/>
</dbReference>
<dbReference type="HOGENOM" id="CLU_106619_2_1_6"/>
<dbReference type="Proteomes" id="UP000009100">
    <property type="component" value="Chromosome 1"/>
</dbReference>
<dbReference type="CDD" id="cd18720">
    <property type="entry name" value="PIN_YqxD-like"/>
    <property type="match status" value="1"/>
</dbReference>
<dbReference type="HAMAP" id="MF_00489">
    <property type="entry name" value="UPF0178"/>
    <property type="match status" value="1"/>
</dbReference>
<dbReference type="InterPro" id="IPR003791">
    <property type="entry name" value="UPF0178"/>
</dbReference>
<dbReference type="NCBIfam" id="NF001095">
    <property type="entry name" value="PRK00124.1"/>
    <property type="match status" value="1"/>
</dbReference>
<dbReference type="PANTHER" id="PTHR35146">
    <property type="entry name" value="UPF0178 PROTEIN YAII"/>
    <property type="match status" value="1"/>
</dbReference>
<dbReference type="PANTHER" id="PTHR35146:SF1">
    <property type="entry name" value="UPF0178 PROTEIN YAII"/>
    <property type="match status" value="1"/>
</dbReference>
<dbReference type="Pfam" id="PF02639">
    <property type="entry name" value="DUF188"/>
    <property type="match status" value="1"/>
</dbReference>
<comment type="similarity">
    <text evidence="1">Belongs to the UPF0178 family.</text>
</comment>
<sequence length="147" mass="16285">MKIWVDADACPKVIRETIVRAAERTGVECTFVANHLVPVPKRNNIHSIQVPSGFDIADDEIVKRTEPGDLVITSDIPLADEVITKGGQALSSRGELYTKETIKARLNIRDFMDTMRSSGIQTGGPSALSQTDRREFANHLDRLLAKR</sequence>